<keyword id="KW-0025">Alternative splicing</keyword>
<keyword id="KW-1003">Cell membrane</keyword>
<keyword id="KW-0903">Direct protein sequencing</keyword>
<keyword id="KW-1015">Disulfide bond</keyword>
<keyword id="KW-0325">Glycoprotein</keyword>
<keyword id="KW-0336">GPI-anchor</keyword>
<keyword id="KW-0449">Lipoprotein</keyword>
<keyword id="KW-0472">Membrane</keyword>
<keyword id="KW-1267">Proteomics identification</keyword>
<keyword id="KW-1185">Reference proteome</keyword>
<keyword id="KW-0964">Secreted</keyword>
<keyword id="KW-0732">Signal</keyword>
<name>EFNA4_HUMAN</name>
<evidence type="ECO:0000255" key="1"/>
<evidence type="ECO:0000255" key="2">
    <source>
        <dbReference type="PROSITE-ProRule" id="PRU00884"/>
    </source>
</evidence>
<evidence type="ECO:0000269" key="3">
    <source>
    </source>
</evidence>
<evidence type="ECO:0000303" key="4">
    <source>
    </source>
</evidence>
<evidence type="ECO:0000305" key="5"/>
<protein>
    <recommendedName>
        <fullName>Ephrin-A4</fullName>
    </recommendedName>
    <alternativeName>
        <fullName>EPH-related receptor tyrosine kinase ligand 4</fullName>
        <shortName>LERK-4</shortName>
    </alternativeName>
</protein>
<dbReference type="EMBL" id="U14188">
    <property type="protein sequence ID" value="AAC50079.1"/>
    <property type="molecule type" value="mRNA"/>
</dbReference>
<dbReference type="EMBL" id="AJ006352">
    <property type="protein sequence ID" value="CAA06992.1"/>
    <property type="molecule type" value="mRNA"/>
</dbReference>
<dbReference type="EMBL" id="AJ006353">
    <property type="protein sequence ID" value="CAA06993.1"/>
    <property type="molecule type" value="mRNA"/>
</dbReference>
<dbReference type="EMBL" id="CR533569">
    <property type="protein sequence ID" value="CAG38600.1"/>
    <property type="molecule type" value="mRNA"/>
</dbReference>
<dbReference type="EMBL" id="AL691442">
    <property type="status" value="NOT_ANNOTATED_CDS"/>
    <property type="molecule type" value="Genomic_DNA"/>
</dbReference>
<dbReference type="EMBL" id="CH471121">
    <property type="protein sequence ID" value="EAW53138.1"/>
    <property type="molecule type" value="Genomic_DNA"/>
</dbReference>
<dbReference type="EMBL" id="CH471121">
    <property type="protein sequence ID" value="EAW53139.1"/>
    <property type="molecule type" value="Genomic_DNA"/>
</dbReference>
<dbReference type="EMBL" id="BC107483">
    <property type="protein sequence ID" value="AAI07484.1"/>
    <property type="molecule type" value="mRNA"/>
</dbReference>
<dbReference type="CCDS" id="CCDS1089.1">
    <molecule id="P52798-1"/>
</dbReference>
<dbReference type="CCDS" id="CCDS41407.1">
    <molecule id="P52798-2"/>
</dbReference>
<dbReference type="CCDS" id="CCDS44237.1">
    <molecule id="P52798-3"/>
</dbReference>
<dbReference type="PIR" id="I38850">
    <property type="entry name" value="I38850"/>
</dbReference>
<dbReference type="RefSeq" id="NP_005218.1">
    <molecule id="P52798-1"/>
    <property type="nucleotide sequence ID" value="NM_005227.3"/>
</dbReference>
<dbReference type="RefSeq" id="NP_872631.1">
    <molecule id="P52798-3"/>
    <property type="nucleotide sequence ID" value="NM_182689.2"/>
</dbReference>
<dbReference type="RefSeq" id="NP_872632.2">
    <molecule id="P52798-2"/>
    <property type="nucleotide sequence ID" value="NM_182690.3"/>
</dbReference>
<dbReference type="SMR" id="P52798"/>
<dbReference type="BioGRID" id="108265">
    <property type="interactions" value="272"/>
</dbReference>
<dbReference type="DIP" id="DIP-48295N"/>
<dbReference type="FunCoup" id="P52798">
    <property type="interactions" value="1099"/>
</dbReference>
<dbReference type="IntAct" id="P52798">
    <property type="interactions" value="124"/>
</dbReference>
<dbReference type="STRING" id="9606.ENSP00000414378"/>
<dbReference type="GlyConnect" id="1211">
    <property type="glycosylation" value="1 N-Linked glycan (1 site)"/>
</dbReference>
<dbReference type="GlyCosmos" id="P52798">
    <property type="glycosylation" value="1 site, 1 glycan"/>
</dbReference>
<dbReference type="GlyGen" id="P52798">
    <property type="glycosylation" value="2 sites, 4 N-linked glycans (1 site), 1 O-linked glycan (1 site)"/>
</dbReference>
<dbReference type="iPTMnet" id="P52798"/>
<dbReference type="PhosphoSitePlus" id="P52798"/>
<dbReference type="BioMuta" id="EFNA4"/>
<dbReference type="DMDM" id="1706672"/>
<dbReference type="jPOST" id="P52798"/>
<dbReference type="MassIVE" id="P52798"/>
<dbReference type="PaxDb" id="9606-ENSP00000414378"/>
<dbReference type="PeptideAtlas" id="P52798"/>
<dbReference type="ProteomicsDB" id="33769"/>
<dbReference type="ProteomicsDB" id="56536">
    <molecule id="P52798-1"/>
</dbReference>
<dbReference type="ProteomicsDB" id="56537">
    <molecule id="P52798-2"/>
</dbReference>
<dbReference type="Antibodypedia" id="34875">
    <property type="antibodies" value="289 antibodies from 29 providers"/>
</dbReference>
<dbReference type="DNASU" id="1945"/>
<dbReference type="Ensembl" id="ENST00000359751.8">
    <molecule id="P52798-2"/>
    <property type="protein sequence ID" value="ENSP00000352789.4"/>
    <property type="gene ID" value="ENSG00000243364.8"/>
</dbReference>
<dbReference type="Ensembl" id="ENST00000368409.8">
    <molecule id="P52798-1"/>
    <property type="protein sequence ID" value="ENSP00000357394.3"/>
    <property type="gene ID" value="ENSG00000243364.8"/>
</dbReference>
<dbReference type="Ensembl" id="ENST00000427683.2">
    <molecule id="P52798-3"/>
    <property type="protein sequence ID" value="ENSP00000414378.2"/>
    <property type="gene ID" value="ENSG00000243364.8"/>
</dbReference>
<dbReference type="GeneID" id="1945"/>
<dbReference type="KEGG" id="hsa:1945"/>
<dbReference type="MANE-Select" id="ENST00000368409.8">
    <property type="protein sequence ID" value="ENSP00000357394.3"/>
    <property type="RefSeq nucleotide sequence ID" value="NM_005227.3"/>
    <property type="RefSeq protein sequence ID" value="NP_005218.1"/>
</dbReference>
<dbReference type="UCSC" id="uc001fhc.4">
    <molecule id="P52798-1"/>
    <property type="organism name" value="human"/>
</dbReference>
<dbReference type="AGR" id="HGNC:3224"/>
<dbReference type="CTD" id="1945"/>
<dbReference type="DisGeNET" id="1945"/>
<dbReference type="GeneCards" id="EFNA4"/>
<dbReference type="HGNC" id="HGNC:3224">
    <property type="gene designation" value="EFNA4"/>
</dbReference>
<dbReference type="HPA" id="ENSG00000243364">
    <property type="expression patterns" value="Tissue enhanced (skin)"/>
</dbReference>
<dbReference type="MIM" id="601380">
    <property type="type" value="gene"/>
</dbReference>
<dbReference type="neXtProt" id="NX_P52798"/>
<dbReference type="OpenTargets" id="ENSG00000243364"/>
<dbReference type="PharmGKB" id="PA27659"/>
<dbReference type="VEuPathDB" id="HostDB:ENSG00000243364"/>
<dbReference type="eggNOG" id="KOG3858">
    <property type="taxonomic scope" value="Eukaryota"/>
</dbReference>
<dbReference type="GeneTree" id="ENSGT00940000162071"/>
<dbReference type="HOGENOM" id="CLU_081598_3_0_1"/>
<dbReference type="InParanoid" id="P52798"/>
<dbReference type="OMA" id="LRHSVYW"/>
<dbReference type="OrthoDB" id="6250301at2759"/>
<dbReference type="PAN-GO" id="P52798">
    <property type="GO annotations" value="4 GO annotations based on evolutionary models"/>
</dbReference>
<dbReference type="PhylomeDB" id="P52798"/>
<dbReference type="PathwayCommons" id="P52798"/>
<dbReference type="Reactome" id="R-HSA-2682334">
    <property type="pathway name" value="EPH-Ephrin signaling"/>
</dbReference>
<dbReference type="Reactome" id="R-HSA-3928663">
    <property type="pathway name" value="EPHA-mediated growth cone collapse"/>
</dbReference>
<dbReference type="Reactome" id="R-HSA-3928665">
    <property type="pathway name" value="EPH-ephrin mediated repulsion of cells"/>
</dbReference>
<dbReference type="SignaLink" id="P52798"/>
<dbReference type="SIGNOR" id="P52798"/>
<dbReference type="BioGRID-ORCS" id="1945">
    <property type="hits" value="23 hits in 1161 CRISPR screens"/>
</dbReference>
<dbReference type="GeneWiki" id="EFNA4"/>
<dbReference type="GenomeRNAi" id="1945"/>
<dbReference type="Pharos" id="P52798">
    <property type="development level" value="Tbio"/>
</dbReference>
<dbReference type="PRO" id="PR:P52798"/>
<dbReference type="Proteomes" id="UP000005640">
    <property type="component" value="Chromosome 1"/>
</dbReference>
<dbReference type="RNAct" id="P52798">
    <property type="molecule type" value="protein"/>
</dbReference>
<dbReference type="Bgee" id="ENSG00000243364">
    <property type="expression patterns" value="Expressed in primordial germ cell in gonad and 121 other cell types or tissues"/>
</dbReference>
<dbReference type="GO" id="GO:0005576">
    <property type="term" value="C:extracellular region"/>
    <property type="evidence" value="ECO:0007669"/>
    <property type="project" value="UniProtKB-SubCell"/>
</dbReference>
<dbReference type="GO" id="GO:0005886">
    <property type="term" value="C:plasma membrane"/>
    <property type="evidence" value="ECO:0000318"/>
    <property type="project" value="GO_Central"/>
</dbReference>
<dbReference type="GO" id="GO:0098552">
    <property type="term" value="C:side of membrane"/>
    <property type="evidence" value="ECO:0007669"/>
    <property type="project" value="UniProtKB-KW"/>
</dbReference>
<dbReference type="GO" id="GO:0046875">
    <property type="term" value="F:ephrin receptor binding"/>
    <property type="evidence" value="ECO:0000353"/>
    <property type="project" value="UniProtKB"/>
</dbReference>
<dbReference type="GO" id="GO:0005005">
    <property type="term" value="F:transmembrane-ephrin receptor activity"/>
    <property type="evidence" value="ECO:0000304"/>
    <property type="project" value="ProtInc"/>
</dbReference>
<dbReference type="GO" id="GO:0007411">
    <property type="term" value="P:axon guidance"/>
    <property type="evidence" value="ECO:0000318"/>
    <property type="project" value="GO_Central"/>
</dbReference>
<dbReference type="GO" id="GO:0007267">
    <property type="term" value="P:cell-cell signaling"/>
    <property type="evidence" value="ECO:0000304"/>
    <property type="project" value="ProtInc"/>
</dbReference>
<dbReference type="GO" id="GO:0048013">
    <property type="term" value="P:ephrin receptor signaling pathway"/>
    <property type="evidence" value="ECO:0000318"/>
    <property type="project" value="GO_Central"/>
</dbReference>
<dbReference type="CDD" id="cd10425">
    <property type="entry name" value="Ephrin-A_Ectodomain"/>
    <property type="match status" value="1"/>
</dbReference>
<dbReference type="FunFam" id="2.60.40.420:FF:000057">
    <property type="entry name" value="Ephrin A4"/>
    <property type="match status" value="1"/>
</dbReference>
<dbReference type="Gene3D" id="2.60.40.420">
    <property type="entry name" value="Cupredoxins - blue copper proteins"/>
    <property type="match status" value="1"/>
</dbReference>
<dbReference type="InterPro" id="IPR008972">
    <property type="entry name" value="Cupredoxin"/>
</dbReference>
<dbReference type="InterPro" id="IPR031328">
    <property type="entry name" value="Ephrin"/>
</dbReference>
<dbReference type="InterPro" id="IPR034252">
    <property type="entry name" value="Ephrin-A_Ecto"/>
</dbReference>
<dbReference type="InterPro" id="IPR019765">
    <property type="entry name" value="Ephrin_CS"/>
</dbReference>
<dbReference type="InterPro" id="IPR001799">
    <property type="entry name" value="Ephrin_RBD"/>
</dbReference>
<dbReference type="PANTHER" id="PTHR11304">
    <property type="entry name" value="EPHRIN"/>
    <property type="match status" value="1"/>
</dbReference>
<dbReference type="PANTHER" id="PTHR11304:SF42">
    <property type="entry name" value="EPHRIN-A4"/>
    <property type="match status" value="1"/>
</dbReference>
<dbReference type="Pfam" id="PF00812">
    <property type="entry name" value="Ephrin"/>
    <property type="match status" value="1"/>
</dbReference>
<dbReference type="PRINTS" id="PR01347">
    <property type="entry name" value="EPHRIN"/>
</dbReference>
<dbReference type="SUPFAM" id="SSF49503">
    <property type="entry name" value="Cupredoxins"/>
    <property type="match status" value="1"/>
</dbReference>
<dbReference type="PROSITE" id="PS01299">
    <property type="entry name" value="EPHRIN_RBD_1"/>
    <property type="match status" value="1"/>
</dbReference>
<dbReference type="PROSITE" id="PS51551">
    <property type="entry name" value="EPHRIN_RBD_2"/>
    <property type="match status" value="1"/>
</dbReference>
<comment type="function">
    <text>Cell surface GPI-bound ligand for Eph receptors, a family of receptor tyrosine kinases which are crucial for migration, repulsion and adhesion during neuronal, vascular and epithelial development. Binds promiscuously Eph receptors residing on adjacent cells, leading to contact-dependent bidirectional signaling into neighboring cells. May play a role in the interaction between activated B-lymphocytes and dendritic cells in tonsils.</text>
</comment>
<comment type="interaction">
    <interactant intactId="EBI-5241592">
        <id>P52798</id>
    </interactant>
    <interactant intactId="EBI-5773557">
        <id>P54764</id>
        <label>EPHA4</label>
    </interactant>
    <organismsDiffer>false</organismsDiffer>
    <experiments>2</experiments>
</comment>
<comment type="interaction">
    <interactant intactId="EBI-5241592">
        <id>P52798</id>
    </interactant>
    <interactant intactId="EBI-348587">
        <id>Q9BVK8</id>
        <label>TMEM147</label>
    </interactant>
    <organismsDiffer>false</organismsDiffer>
    <experiments>3</experiments>
</comment>
<comment type="interaction">
    <interactant intactId="EBI-5241592">
        <id>P52798</id>
    </interactant>
    <interactant intactId="EBI-11988865">
        <id>A5PKU2</id>
        <label>TUSC5</label>
    </interactant>
    <organismsDiffer>false</organismsDiffer>
    <experiments>3</experiments>
</comment>
<comment type="subcellular location">
    <molecule>Isoform 1</molecule>
    <subcellularLocation>
        <location>Cell membrane</location>
        <topology>Lipid-anchor</topology>
        <topology>GPI-anchor</topology>
    </subcellularLocation>
</comment>
<comment type="subcellular location">
    <molecule>Isoform 2</molecule>
    <subcellularLocation>
        <location evidence="5">Secreted</location>
    </subcellularLocation>
</comment>
<comment type="alternative products">
    <event type="alternative splicing"/>
    <isoform>
        <id>P52798-1</id>
        <name>1</name>
        <name>GPI-anchored</name>
        <sequence type="displayed"/>
    </isoform>
    <isoform>
        <id>P52798-2</id>
        <name>2</name>
        <name>Secreted</name>
        <sequence type="described" ref="VSP_001448"/>
    </isoform>
    <isoform>
        <id>P52798-3</id>
        <name>3</name>
        <sequence type="described" ref="VSP_046707"/>
    </isoform>
</comment>
<comment type="tissue specificity">
    <text>Expressed in the adult spleen, lymph node, prostate, ovary, small intestine, and colon, and in fetal heart, lung, liver and kidney. Also detected in hematopoietic cell lines.</text>
</comment>
<comment type="similarity">
    <text evidence="2">Belongs to the ephrin family.</text>
</comment>
<reference key="1">
    <citation type="journal article" date="1995" name="Oncogene">
        <title>Ligands for the receptor tyrosine kinases hek and elk: isolation of cDNAs encoding a family of proteins.</title>
        <authorList>
            <person name="Kozlosky C.J."/>
            <person name="Maraskovsky E."/>
            <person name="McGrew J.T."/>
            <person name="Vanden Bos T."/>
            <person name="Teepe M."/>
            <person name="Lyman S.D."/>
            <person name="Srinivasan S."/>
            <person name="Fletcher F.A."/>
            <person name="Gayle R.B. III"/>
            <person name="Cerretti D.P."/>
            <person name="Beckmann M.P."/>
        </authorList>
    </citation>
    <scope>NUCLEOTIDE SEQUENCE [MRNA] (ISOFORM 1)</scope>
</reference>
<reference key="2">
    <citation type="journal article" date="2000" name="Blood">
        <title>A splice variant of human ephrin-A4 encodes a soluble molecule that is secreted by activated human B lymphocytes.</title>
        <authorList>
            <person name="Aasheim H.-C."/>
            <person name="Munthe E."/>
            <person name="Funderud S."/>
            <person name="Smeland E.B."/>
            <person name="Beiske K."/>
            <person name="Logtenberg T."/>
        </authorList>
    </citation>
    <scope>NUCLEOTIDE SEQUENCE [MRNA] (ISOFORMS 1 AND 2)</scope>
    <source>
        <tissue>B-cell</tissue>
    </source>
</reference>
<reference key="3">
    <citation type="submission" date="2004-06" db="EMBL/GenBank/DDBJ databases">
        <title>Cloning of human full open reading frames in Gateway(TM) system entry vector (pDONR201).</title>
        <authorList>
            <person name="Ebert L."/>
            <person name="Schick M."/>
            <person name="Neubert P."/>
            <person name="Schatten R."/>
            <person name="Henze S."/>
            <person name="Korn B."/>
        </authorList>
    </citation>
    <scope>NUCLEOTIDE SEQUENCE [LARGE SCALE MRNA] (ISOFORM 1)</scope>
</reference>
<reference key="4">
    <citation type="journal article" date="2006" name="Nature">
        <title>The DNA sequence and biological annotation of human chromosome 1.</title>
        <authorList>
            <person name="Gregory S.G."/>
            <person name="Barlow K.F."/>
            <person name="McLay K.E."/>
            <person name="Kaul R."/>
            <person name="Swarbreck D."/>
            <person name="Dunham A."/>
            <person name="Scott C.E."/>
            <person name="Howe K.L."/>
            <person name="Woodfine K."/>
            <person name="Spencer C.C.A."/>
            <person name="Jones M.C."/>
            <person name="Gillson C."/>
            <person name="Searle S."/>
            <person name="Zhou Y."/>
            <person name="Kokocinski F."/>
            <person name="McDonald L."/>
            <person name="Evans R."/>
            <person name="Phillips K."/>
            <person name="Atkinson A."/>
            <person name="Cooper R."/>
            <person name="Jones C."/>
            <person name="Hall R.E."/>
            <person name="Andrews T.D."/>
            <person name="Lloyd C."/>
            <person name="Ainscough R."/>
            <person name="Almeida J.P."/>
            <person name="Ambrose K.D."/>
            <person name="Anderson F."/>
            <person name="Andrew R.W."/>
            <person name="Ashwell R.I.S."/>
            <person name="Aubin K."/>
            <person name="Babbage A.K."/>
            <person name="Bagguley C.L."/>
            <person name="Bailey J."/>
            <person name="Beasley H."/>
            <person name="Bethel G."/>
            <person name="Bird C.P."/>
            <person name="Bray-Allen S."/>
            <person name="Brown J.Y."/>
            <person name="Brown A.J."/>
            <person name="Buckley D."/>
            <person name="Burton J."/>
            <person name="Bye J."/>
            <person name="Carder C."/>
            <person name="Chapman J.C."/>
            <person name="Clark S.Y."/>
            <person name="Clarke G."/>
            <person name="Clee C."/>
            <person name="Cobley V."/>
            <person name="Collier R.E."/>
            <person name="Corby N."/>
            <person name="Coville G.J."/>
            <person name="Davies J."/>
            <person name="Deadman R."/>
            <person name="Dunn M."/>
            <person name="Earthrowl M."/>
            <person name="Ellington A.G."/>
            <person name="Errington H."/>
            <person name="Frankish A."/>
            <person name="Frankland J."/>
            <person name="French L."/>
            <person name="Garner P."/>
            <person name="Garnett J."/>
            <person name="Gay L."/>
            <person name="Ghori M.R.J."/>
            <person name="Gibson R."/>
            <person name="Gilby L.M."/>
            <person name="Gillett W."/>
            <person name="Glithero R.J."/>
            <person name="Grafham D.V."/>
            <person name="Griffiths C."/>
            <person name="Griffiths-Jones S."/>
            <person name="Grocock R."/>
            <person name="Hammond S."/>
            <person name="Harrison E.S.I."/>
            <person name="Hart E."/>
            <person name="Haugen E."/>
            <person name="Heath P.D."/>
            <person name="Holmes S."/>
            <person name="Holt K."/>
            <person name="Howden P.J."/>
            <person name="Hunt A.R."/>
            <person name="Hunt S.E."/>
            <person name="Hunter G."/>
            <person name="Isherwood J."/>
            <person name="James R."/>
            <person name="Johnson C."/>
            <person name="Johnson D."/>
            <person name="Joy A."/>
            <person name="Kay M."/>
            <person name="Kershaw J.K."/>
            <person name="Kibukawa M."/>
            <person name="Kimberley A.M."/>
            <person name="King A."/>
            <person name="Knights A.J."/>
            <person name="Lad H."/>
            <person name="Laird G."/>
            <person name="Lawlor S."/>
            <person name="Leongamornlert D.A."/>
            <person name="Lloyd D.M."/>
            <person name="Loveland J."/>
            <person name="Lovell J."/>
            <person name="Lush M.J."/>
            <person name="Lyne R."/>
            <person name="Martin S."/>
            <person name="Mashreghi-Mohammadi M."/>
            <person name="Matthews L."/>
            <person name="Matthews N.S.W."/>
            <person name="McLaren S."/>
            <person name="Milne S."/>
            <person name="Mistry S."/>
            <person name="Moore M.J.F."/>
            <person name="Nickerson T."/>
            <person name="O'Dell C.N."/>
            <person name="Oliver K."/>
            <person name="Palmeiri A."/>
            <person name="Palmer S.A."/>
            <person name="Parker A."/>
            <person name="Patel D."/>
            <person name="Pearce A.V."/>
            <person name="Peck A.I."/>
            <person name="Pelan S."/>
            <person name="Phelps K."/>
            <person name="Phillimore B.J."/>
            <person name="Plumb R."/>
            <person name="Rajan J."/>
            <person name="Raymond C."/>
            <person name="Rouse G."/>
            <person name="Saenphimmachak C."/>
            <person name="Sehra H.K."/>
            <person name="Sheridan E."/>
            <person name="Shownkeen R."/>
            <person name="Sims S."/>
            <person name="Skuce C.D."/>
            <person name="Smith M."/>
            <person name="Steward C."/>
            <person name="Subramanian S."/>
            <person name="Sycamore N."/>
            <person name="Tracey A."/>
            <person name="Tromans A."/>
            <person name="Van Helmond Z."/>
            <person name="Wall M."/>
            <person name="Wallis J.M."/>
            <person name="White S."/>
            <person name="Whitehead S.L."/>
            <person name="Wilkinson J.E."/>
            <person name="Willey D.L."/>
            <person name="Williams H."/>
            <person name="Wilming L."/>
            <person name="Wray P.W."/>
            <person name="Wu Z."/>
            <person name="Coulson A."/>
            <person name="Vaudin M."/>
            <person name="Sulston J.E."/>
            <person name="Durbin R.M."/>
            <person name="Hubbard T."/>
            <person name="Wooster R."/>
            <person name="Dunham I."/>
            <person name="Carter N.P."/>
            <person name="McVean G."/>
            <person name="Ross M.T."/>
            <person name="Harrow J."/>
            <person name="Olson M.V."/>
            <person name="Beck S."/>
            <person name="Rogers J."/>
            <person name="Bentley D.R."/>
        </authorList>
    </citation>
    <scope>NUCLEOTIDE SEQUENCE [LARGE SCALE GENOMIC DNA]</scope>
</reference>
<reference key="5">
    <citation type="submission" date="2005-09" db="EMBL/GenBank/DDBJ databases">
        <authorList>
            <person name="Mural R.J."/>
            <person name="Istrail S."/>
            <person name="Sutton G.G."/>
            <person name="Florea L."/>
            <person name="Halpern A.L."/>
            <person name="Mobarry C.M."/>
            <person name="Lippert R."/>
            <person name="Walenz B."/>
            <person name="Shatkay H."/>
            <person name="Dew I."/>
            <person name="Miller J.R."/>
            <person name="Flanigan M.J."/>
            <person name="Edwards N.J."/>
            <person name="Bolanos R."/>
            <person name="Fasulo D."/>
            <person name="Halldorsson B.V."/>
            <person name="Hannenhalli S."/>
            <person name="Turner R."/>
            <person name="Yooseph S."/>
            <person name="Lu F."/>
            <person name="Nusskern D.R."/>
            <person name="Shue B.C."/>
            <person name="Zheng X.H."/>
            <person name="Zhong F."/>
            <person name="Delcher A.L."/>
            <person name="Huson D.H."/>
            <person name="Kravitz S.A."/>
            <person name="Mouchard L."/>
            <person name="Reinert K."/>
            <person name="Remington K.A."/>
            <person name="Clark A.G."/>
            <person name="Waterman M.S."/>
            <person name="Eichler E.E."/>
            <person name="Adams M.D."/>
            <person name="Hunkapiller M.W."/>
            <person name="Myers E.W."/>
            <person name="Venter J.C."/>
        </authorList>
    </citation>
    <scope>NUCLEOTIDE SEQUENCE [LARGE SCALE GENOMIC DNA]</scope>
</reference>
<reference key="6">
    <citation type="journal article" date="2004" name="Genome Res.">
        <title>The status, quality, and expansion of the NIH full-length cDNA project: the Mammalian Gene Collection (MGC).</title>
        <authorList>
            <consortium name="The MGC Project Team"/>
        </authorList>
    </citation>
    <scope>NUCLEOTIDE SEQUENCE [LARGE SCALE MRNA] (ISOFORM 1)</scope>
</reference>
<reference key="7">
    <citation type="journal article" date="2004" name="Protein Sci.">
        <title>Signal peptide prediction based on analysis of experimentally verified cleavage sites.</title>
        <authorList>
            <person name="Zhang Z."/>
            <person name="Henzel W.J."/>
        </authorList>
    </citation>
    <scope>PROTEIN SEQUENCE OF 26-40</scope>
</reference>
<proteinExistence type="evidence at protein level"/>
<organism>
    <name type="scientific">Homo sapiens</name>
    <name type="common">Human</name>
    <dbReference type="NCBI Taxonomy" id="9606"/>
    <lineage>
        <taxon>Eukaryota</taxon>
        <taxon>Metazoa</taxon>
        <taxon>Chordata</taxon>
        <taxon>Craniata</taxon>
        <taxon>Vertebrata</taxon>
        <taxon>Euteleostomi</taxon>
        <taxon>Mammalia</taxon>
        <taxon>Eutheria</taxon>
        <taxon>Euarchontoglires</taxon>
        <taxon>Primates</taxon>
        <taxon>Haplorrhini</taxon>
        <taxon>Catarrhini</taxon>
        <taxon>Hominidae</taxon>
        <taxon>Homo</taxon>
    </lineage>
</organism>
<accession>P52798</accession>
<accession>C9JHJ8</accession>
<accession>G3XAK2</accession>
<accession>O95457</accession>
<accession>Q5SR71</accession>
<accession>Q6FI57</accession>
<feature type="signal peptide" evidence="3">
    <location>
        <begin position="1"/>
        <end position="25"/>
    </location>
</feature>
<feature type="chain" id="PRO_0000008373" description="Ephrin-A4">
    <location>
        <begin position="26"/>
        <end position="170"/>
    </location>
</feature>
<feature type="propeptide" id="PRO_0000008374" description="Removed in mature form" evidence="1">
    <location>
        <begin position="171"/>
        <end position="201"/>
    </location>
</feature>
<feature type="domain" description="Ephrin RBD" evidence="2">
    <location>
        <begin position="26"/>
        <end position="155"/>
    </location>
</feature>
<feature type="lipid moiety-binding region" description="GPI-anchor amidated serine" evidence="1">
    <location>
        <position position="170"/>
    </location>
</feature>
<feature type="glycosylation site" description="N-linked (GlcNAc...) asparagine" evidence="1">
    <location>
        <position position="33"/>
    </location>
</feature>
<feature type="disulfide bond" evidence="2">
    <location>
        <begin position="58"/>
        <end position="99"/>
    </location>
</feature>
<feature type="disulfide bond" evidence="2">
    <location>
        <begin position="86"/>
        <end position="144"/>
    </location>
</feature>
<feature type="splice variant" id="VSP_001448" description="In isoform 2." evidence="4">
    <original>KSESAHPVGSPGESGTSGWRGGDTPSPLCLLLLLLLLILRLLRIL</original>
    <variation>NLPSHPKEPESSQDPLEEEGSLLPALGVPIQTDKMEH</variation>
    <location>
        <begin position="157"/>
        <end position="201"/>
    </location>
</feature>
<feature type="splice variant" id="VSP_046707" description="In isoform 3." evidence="5">
    <original>KSESAHPVGSPGESGTSGWRGGDTPSPLCLLLLLLLLILRLLRIL</original>
    <variation>RARVLPRSPGGGGIPAACTGGANSDRQDGALMGEIRGSEVTLAGACPLITG</variation>
    <location>
        <begin position="157"/>
        <end position="201"/>
    </location>
</feature>
<gene>
    <name type="primary">EFNA4</name>
    <name type="synonym">EPLG4</name>
    <name type="synonym">LERK4</name>
</gene>
<sequence>MRLLPLLRTVLWAAFLGSPLRGGSSLRHVVYWNSSNPRLLRGDAVVELGLNDYLDIVCPHYEGPGPPEGPETFALYMVDWPGYESCQAEGPRAYKRWVCSLPFGHVQFSEKIQRFTPFSLGFEFLPGETYYYISVPTPESSGQCLRLQVSVCCKERKSESAHPVGSPGESGTSGWRGGDTPSPLCLLLLLLLLILRLLRIL</sequence>